<sequence length="341" mass="38348">MIINIVEILIFLVCVLFSVAYLTVAERKTLAYMQRRLGPNFVGYYGLLQAFADAVKLLLKEIVLPKESNYIILVISPLITLITALIGWVVIPLGPGITLGELNLGILFSLAIGSLGVFGSLLSGWSSNSKYSLLGSIRSTAQLISYELILTSIFIIIIMFVSSLNITTIIETQRVVWYCIPLLPLLLIFFIASVAETARPPFDLTESESELVAGYFTEYSGSPFVFFFLAEYSNIILISAFNGYLLLGGYLSFNYSYLFNILFNDYSYVSFLFEGLINSSAYAIKLVFLMFSFIWVRAAFPRFTYDNLINFCWIILLPLLFGIFLIIPSTLYIFDSFPTLI</sequence>
<proteinExistence type="evidence at protein level"/>
<feature type="chain" id="PRO_0000117501" description="NADH-ubiquinone oxidoreductase chain 1">
    <location>
        <begin position="1"/>
        <end position="341"/>
    </location>
</feature>
<feature type="transmembrane region" description="Helical" evidence="2">
    <location>
        <begin position="2"/>
        <end position="22"/>
    </location>
</feature>
<feature type="transmembrane region" description="Helical" evidence="2">
    <location>
        <begin position="39"/>
        <end position="59"/>
    </location>
</feature>
<feature type="transmembrane region" description="Helical" evidence="2">
    <location>
        <begin position="71"/>
        <end position="91"/>
    </location>
</feature>
<feature type="transmembrane region" description="Helical" evidence="2">
    <location>
        <begin position="104"/>
        <end position="124"/>
    </location>
</feature>
<feature type="transmembrane region" description="Helical" evidence="2">
    <location>
        <begin position="141"/>
        <end position="161"/>
    </location>
</feature>
<feature type="transmembrane region" description="Helical" evidence="2">
    <location>
        <begin position="175"/>
        <end position="195"/>
    </location>
</feature>
<feature type="transmembrane region" description="Helical" evidence="2">
    <location>
        <begin position="212"/>
        <end position="230"/>
    </location>
</feature>
<feature type="transmembrane region" description="Helical" evidence="2">
    <location>
        <begin position="243"/>
        <end position="263"/>
    </location>
</feature>
<feature type="transmembrane region" description="Helical" evidence="2">
    <location>
        <begin position="276"/>
        <end position="296"/>
    </location>
</feature>
<feature type="transmembrane region" description="Helical" evidence="2">
    <location>
        <begin position="308"/>
        <end position="328"/>
    </location>
</feature>
<feature type="helix" evidence="8">
    <location>
        <begin position="2"/>
        <end position="33"/>
    </location>
</feature>
<feature type="turn" evidence="8">
    <location>
        <begin position="41"/>
        <end position="43"/>
    </location>
</feature>
<feature type="helix" evidence="8">
    <location>
        <begin position="44"/>
        <end position="46"/>
    </location>
</feature>
<feature type="helix" evidence="8">
    <location>
        <begin position="49"/>
        <end position="58"/>
    </location>
</feature>
<feature type="strand" evidence="5">
    <location>
        <begin position="60"/>
        <end position="62"/>
    </location>
</feature>
<feature type="helix" evidence="8">
    <location>
        <begin position="70"/>
        <end position="86"/>
    </location>
</feature>
<feature type="helix" evidence="8">
    <location>
        <begin position="87"/>
        <end position="90"/>
    </location>
</feature>
<feature type="strand" evidence="7">
    <location>
        <begin position="93"/>
        <end position="96"/>
    </location>
</feature>
<feature type="strand" evidence="6">
    <location>
        <begin position="98"/>
        <end position="100"/>
    </location>
</feature>
<feature type="helix" evidence="8">
    <location>
        <begin position="105"/>
        <end position="114"/>
    </location>
</feature>
<feature type="helix" evidence="8">
    <location>
        <begin position="115"/>
        <end position="117"/>
    </location>
</feature>
<feature type="helix" evidence="8">
    <location>
        <begin position="118"/>
        <end position="126"/>
    </location>
</feature>
<feature type="helix" evidence="8">
    <location>
        <begin position="130"/>
        <end position="161"/>
    </location>
</feature>
<feature type="helix" evidence="8">
    <location>
        <begin position="166"/>
        <end position="171"/>
    </location>
</feature>
<feature type="helix" evidence="8">
    <location>
        <begin position="172"/>
        <end position="174"/>
    </location>
</feature>
<feature type="turn" evidence="8">
    <location>
        <begin position="178"/>
        <end position="182"/>
    </location>
</feature>
<feature type="helix" evidence="8">
    <location>
        <begin position="183"/>
        <end position="196"/>
    </location>
</feature>
<feature type="helix" evidence="8">
    <location>
        <begin position="204"/>
        <end position="207"/>
    </location>
</feature>
<feature type="strand" evidence="8">
    <location>
        <begin position="208"/>
        <end position="211"/>
    </location>
</feature>
<feature type="helix" evidence="8">
    <location>
        <begin position="214"/>
        <end position="216"/>
    </location>
</feature>
<feature type="helix" evidence="8">
    <location>
        <begin position="222"/>
        <end position="246"/>
    </location>
</feature>
<feature type="helix" evidence="8">
    <location>
        <begin position="256"/>
        <end position="262"/>
    </location>
</feature>
<feature type="helix" evidence="8">
    <location>
        <begin position="268"/>
        <end position="299"/>
    </location>
</feature>
<feature type="helix" evidence="8">
    <location>
        <begin position="305"/>
        <end position="314"/>
    </location>
</feature>
<feature type="helix" evidence="8">
    <location>
        <begin position="316"/>
        <end position="333"/>
    </location>
</feature>
<evidence type="ECO:0000250" key="1"/>
<evidence type="ECO:0000255" key="2"/>
<evidence type="ECO:0000269" key="3">
    <source>
    </source>
</evidence>
<evidence type="ECO:0000305" key="4"/>
<evidence type="ECO:0007829" key="5">
    <source>
        <dbReference type="PDB" id="6RFQ"/>
    </source>
</evidence>
<evidence type="ECO:0007829" key="6">
    <source>
        <dbReference type="PDB" id="6RFR"/>
    </source>
</evidence>
<evidence type="ECO:0007829" key="7">
    <source>
        <dbReference type="PDB" id="6YJ4"/>
    </source>
</evidence>
<evidence type="ECO:0007829" key="8">
    <source>
        <dbReference type="PDB" id="7O71"/>
    </source>
</evidence>
<name>NU1M_YARLI</name>
<protein>
    <recommendedName>
        <fullName>NADH-ubiquinone oxidoreductase chain 1</fullName>
        <ecNumber>7.1.1.2</ecNumber>
    </recommendedName>
    <alternativeName>
        <fullName>NADH dehydrogenase subunit 1</fullName>
    </alternativeName>
</protein>
<organism>
    <name type="scientific">Yarrowia lipolytica (strain CLIB 122 / E 150)</name>
    <name type="common">Yeast</name>
    <name type="synonym">Candida lipolytica</name>
    <dbReference type="NCBI Taxonomy" id="284591"/>
    <lineage>
        <taxon>Eukaryota</taxon>
        <taxon>Fungi</taxon>
        <taxon>Dikarya</taxon>
        <taxon>Ascomycota</taxon>
        <taxon>Saccharomycotina</taxon>
        <taxon>Dipodascomycetes</taxon>
        <taxon>Dipodascales</taxon>
        <taxon>Dipodascales incertae sedis</taxon>
        <taxon>Yarrowia</taxon>
    </lineage>
</organism>
<keyword id="KW-0002">3D-structure</keyword>
<keyword id="KW-0249">Electron transport</keyword>
<keyword id="KW-0472">Membrane</keyword>
<keyword id="KW-0496">Mitochondrion</keyword>
<keyword id="KW-0999">Mitochondrion inner membrane</keyword>
<keyword id="KW-0520">NAD</keyword>
<keyword id="KW-1185">Reference proteome</keyword>
<keyword id="KW-0679">Respiratory chain</keyword>
<keyword id="KW-1278">Translocase</keyword>
<keyword id="KW-0812">Transmembrane</keyword>
<keyword id="KW-1133">Transmembrane helix</keyword>
<keyword id="KW-0813">Transport</keyword>
<keyword id="KW-0830">Ubiquinone</keyword>
<reference key="1">
    <citation type="journal article" date="2001" name="Comp. Funct. Genomics">
        <title>The complete mitochondrial genome of Yarrowia lipolytica.</title>
        <authorList>
            <person name="Kerscher S."/>
            <person name="Durstewitz G."/>
            <person name="Casaregola S."/>
            <person name="Gaillardin C."/>
            <person name="Brandt U."/>
        </authorList>
    </citation>
    <scope>NUCLEOTIDE SEQUENCE [LARGE SCALE GENOMIC DNA]</scope>
    <source>
        <strain>ATCC 20460 / W29 / CBS 7504 / IFP29</strain>
    </source>
</reference>
<reference key="2">
    <citation type="journal article" date="2004" name="Biochim. Biophys. Acta">
        <title>Subunit composition of mitochondrial complex I from the yeast Yarrowia lipolytica.</title>
        <authorList>
            <person name="Abdrakhmanova A."/>
            <person name="Zickermann V."/>
            <person name="Bostina M."/>
            <person name="Radermacher M."/>
            <person name="Schagger H."/>
            <person name="Kerscher S."/>
            <person name="Brandt U."/>
        </authorList>
    </citation>
    <scope>SUBUNIT</scope>
</reference>
<comment type="function">
    <text>Core subunit of the mitochondrial membrane respiratory chain NADH dehydrogenase (Complex I) that is believed to belong to the minimal assembly required for catalysis. Complex I functions in the transfer of electrons from NADH to the respiratory chain. The immediate electron acceptor for the enzyme is believed to be ubiquinone.</text>
</comment>
<comment type="catalytic activity">
    <reaction>
        <text>a ubiquinone + NADH + 5 H(+)(in) = a ubiquinol + NAD(+) + 4 H(+)(out)</text>
        <dbReference type="Rhea" id="RHEA:29091"/>
        <dbReference type="Rhea" id="RHEA-COMP:9565"/>
        <dbReference type="Rhea" id="RHEA-COMP:9566"/>
        <dbReference type="ChEBI" id="CHEBI:15378"/>
        <dbReference type="ChEBI" id="CHEBI:16389"/>
        <dbReference type="ChEBI" id="CHEBI:17976"/>
        <dbReference type="ChEBI" id="CHEBI:57540"/>
        <dbReference type="ChEBI" id="CHEBI:57945"/>
        <dbReference type="EC" id="7.1.1.2"/>
    </reaction>
</comment>
<comment type="subunit">
    <text evidence="3">Complex I is composed of 37 different subunits.</text>
</comment>
<comment type="subcellular location">
    <subcellularLocation>
        <location evidence="1">Mitochondrion inner membrane</location>
        <topology evidence="1">Multi-pass membrane protein</topology>
    </subcellularLocation>
</comment>
<comment type="similarity">
    <text evidence="4">Belongs to the complex I subunit 1 family.</text>
</comment>
<geneLocation type="mitochondrion"/>
<dbReference type="EC" id="7.1.1.2"/>
<dbReference type="EMBL" id="AJ307410">
    <property type="protein sequence ID" value="CAC28089.2"/>
    <property type="molecule type" value="Genomic_DNA"/>
</dbReference>
<dbReference type="RefSeq" id="NP_075424.2">
    <property type="nucleotide sequence ID" value="NC_002659.1"/>
</dbReference>
<dbReference type="PDB" id="6GCS">
    <property type="method" value="EM"/>
    <property type="resolution" value="4.32 A"/>
    <property type="chains" value="1=1-341"/>
</dbReference>
<dbReference type="PDB" id="6H8K">
    <property type="method" value="X-ray"/>
    <property type="resolution" value="3.79 A"/>
    <property type="chains" value="1=1-335"/>
</dbReference>
<dbReference type="PDB" id="6RFQ">
    <property type="method" value="EM"/>
    <property type="resolution" value="3.30 A"/>
    <property type="chains" value="1=1-341"/>
</dbReference>
<dbReference type="PDB" id="6RFR">
    <property type="method" value="EM"/>
    <property type="resolution" value="3.20 A"/>
    <property type="chains" value="1=1-341"/>
</dbReference>
<dbReference type="PDB" id="6RFS">
    <property type="method" value="EM"/>
    <property type="resolution" value="4.04 A"/>
    <property type="chains" value="1=1-341"/>
</dbReference>
<dbReference type="PDB" id="6Y79">
    <property type="method" value="EM"/>
    <property type="resolution" value="3.20 A"/>
    <property type="chains" value="1=1-341"/>
</dbReference>
<dbReference type="PDB" id="6YJ4">
    <property type="method" value="EM"/>
    <property type="resolution" value="2.70 A"/>
    <property type="chains" value="H=1-341"/>
</dbReference>
<dbReference type="PDB" id="7O6Y">
    <property type="method" value="EM"/>
    <property type="resolution" value="3.40 A"/>
    <property type="chains" value="1=1-341"/>
</dbReference>
<dbReference type="PDB" id="7O71">
    <property type="method" value="EM"/>
    <property type="resolution" value="2.40 A"/>
    <property type="chains" value="1=1-341"/>
</dbReference>
<dbReference type="PDB" id="7ZKP">
    <property type="method" value="EM"/>
    <property type="resolution" value="3.20 A"/>
    <property type="chains" value="1=1-341"/>
</dbReference>
<dbReference type="PDBsum" id="6GCS"/>
<dbReference type="PDBsum" id="6H8K"/>
<dbReference type="PDBsum" id="6RFQ"/>
<dbReference type="PDBsum" id="6RFR"/>
<dbReference type="PDBsum" id="6RFS"/>
<dbReference type="PDBsum" id="6Y79"/>
<dbReference type="PDBsum" id="6YJ4"/>
<dbReference type="PDBsum" id="7O6Y"/>
<dbReference type="PDBsum" id="7O71"/>
<dbReference type="PDBsum" id="7ZKP"/>
<dbReference type="EMDB" id="EMD-4384"/>
<dbReference type="SMR" id="Q9B6E8"/>
<dbReference type="DIP" id="DIP-61436N"/>
<dbReference type="IntAct" id="Q9B6E8">
    <property type="interactions" value="2"/>
</dbReference>
<dbReference type="STRING" id="284591.Q9B6E8"/>
<dbReference type="GeneID" id="802607"/>
<dbReference type="KEGG" id="yli:802607"/>
<dbReference type="InParanoid" id="Q9B6E8"/>
<dbReference type="Proteomes" id="UP000001300">
    <property type="component" value="Mitochondrion"/>
</dbReference>
<dbReference type="GO" id="GO:0005743">
    <property type="term" value="C:mitochondrial inner membrane"/>
    <property type="evidence" value="ECO:0007669"/>
    <property type="project" value="UniProtKB-SubCell"/>
</dbReference>
<dbReference type="GO" id="GO:0045271">
    <property type="term" value="C:respiratory chain complex I"/>
    <property type="evidence" value="ECO:0000318"/>
    <property type="project" value="GO_Central"/>
</dbReference>
<dbReference type="GO" id="GO:0008137">
    <property type="term" value="F:NADH dehydrogenase (ubiquinone) activity"/>
    <property type="evidence" value="ECO:0007669"/>
    <property type="project" value="UniProtKB-EC"/>
</dbReference>
<dbReference type="GO" id="GO:0009060">
    <property type="term" value="P:aerobic respiration"/>
    <property type="evidence" value="ECO:0000318"/>
    <property type="project" value="GO_Central"/>
</dbReference>
<dbReference type="HAMAP" id="MF_01350">
    <property type="entry name" value="NDH1_NuoH"/>
    <property type="match status" value="1"/>
</dbReference>
<dbReference type="InterPro" id="IPR001694">
    <property type="entry name" value="NADH_UbQ_OxRdtase_su1/FPO"/>
</dbReference>
<dbReference type="InterPro" id="IPR018086">
    <property type="entry name" value="NADH_UbQ_OxRdtase_su1_CS"/>
</dbReference>
<dbReference type="PANTHER" id="PTHR11432">
    <property type="entry name" value="NADH DEHYDROGENASE SUBUNIT 1"/>
    <property type="match status" value="1"/>
</dbReference>
<dbReference type="PANTHER" id="PTHR11432:SF3">
    <property type="entry name" value="NADH-UBIQUINONE OXIDOREDUCTASE CHAIN 1"/>
    <property type="match status" value="1"/>
</dbReference>
<dbReference type="Pfam" id="PF00146">
    <property type="entry name" value="NADHdh"/>
    <property type="match status" value="1"/>
</dbReference>
<dbReference type="PROSITE" id="PS00667">
    <property type="entry name" value="COMPLEX1_ND1_1"/>
    <property type="match status" value="1"/>
</dbReference>
<dbReference type="PROSITE" id="PS00668">
    <property type="entry name" value="COMPLEX1_ND1_2"/>
    <property type="match status" value="1"/>
</dbReference>
<accession>Q9B6E8</accession>
<gene>
    <name type="primary">ND1</name>
</gene>